<organism>
    <name type="scientific">Thermus thermophilus (strain ATCC 27634 / DSM 579 / HB8)</name>
    <dbReference type="NCBI Taxonomy" id="300852"/>
    <lineage>
        <taxon>Bacteria</taxon>
        <taxon>Thermotogati</taxon>
        <taxon>Deinococcota</taxon>
        <taxon>Deinococci</taxon>
        <taxon>Thermales</taxon>
        <taxon>Thermaceae</taxon>
        <taxon>Thermus</taxon>
    </lineage>
</organism>
<sequence>MEIKRFGRIREVIPLPPLTEIQVESYRRALQADVPPEKRENVGIQAAFRETFPIEEEDKGKGGLVLDFLEYRLGEPPFPQDECREKDLTYQAPLYARLQLIHKDTGLIKEDEVFLGHIPLMTEDGSFIINGADRVIVSQIHRSPGVYFTPDPARPGRYIASIIPLPKRGPWIDLEVEPNGVVSMKVNKRKFPLVLLLRVLGYDQETLARELGAYGELVQGLMDESVFAMRPEEALIRLFTLLRPGDPPKRDKAVAYVYGLIADPRRYDLGEAGRYKAEEKLGIRLSGRTLARFEDGEFKDEVFLPTLRYLFALTAGVPGHEVDDIDHLGNRRIRTVGELMTDQFRVGLARLARGVRERMLMGSEDSLTPAKLVNSRPLEAAIREFFSRSQLSQFKDETNPLSSLRHKRRISALGPGGLTRERAGFDVRDVHRTHYGRICPVETPEGANIGLITSLAAYARVDELGFIRTPYRRVVGGVVTDEVVYMTATEEDRYTIAQANTPLEGNRIAAERVVARRKGEPVIVSPEEVEFMDVSPKQVFSVNTNLIPFLEHDDANRALMGSNMQTQAVPLIRAQAPVVMTGLEERVVRDSLAALYAEEDGEVAKVDGNRIVVRYEDGRLVEYPLRRFYRSNQGTALDQRPRVVVGQRVRKGDLLADGPASENGFLALGQNVLVAIMPFDGYNFEDAIVISEELLKRDFYTSIHIERYEIEARDTKLGPERITRDIPHLSEAALRDLDEEGVVRIGAEVKPGDILVGRTSFKGESEPTPEERLLRSIFGEKARDVKDTSLRVPPGEGGIVVRTVRLRRGDPGVELKPGVREVVRVYVAQKRKLQVGDKLANRHGNKGVVAKILPVEDMPHLPDGTPVDVILNPLGVPSRMNLGQILETHLGLAGYFLGQRYISPIFDGAKEPEIKELLAQAFEVYFGKRKGEGFGVDKREVEVLRRAEKLGLVTPGKTPEEQLKELFLQGKVVLYDGRTGEPIEGPIVVGQMFIMKLYHMVEDKMHARSTGPYSLITQQPLGGKAQFGGQRFGEMEVWALEAYGAAHTLQEMLTLKSDDIEGRNAAYEAIIKGEDVPEPSVPESFRVLVKELQALALDVQTLDEKDNPVDIFEGLASKR</sequence>
<comment type="function">
    <text>DNA-dependent RNA polymerase catalyzes the transcription of DNA into RNA using the four ribonucleoside triphosphates as substrates.</text>
</comment>
<comment type="catalytic activity">
    <reaction evidence="1">
        <text>RNA(n) + a ribonucleoside 5'-triphosphate = RNA(n+1) + diphosphate</text>
        <dbReference type="Rhea" id="RHEA:21248"/>
        <dbReference type="Rhea" id="RHEA-COMP:14527"/>
        <dbReference type="Rhea" id="RHEA-COMP:17342"/>
        <dbReference type="ChEBI" id="CHEBI:33019"/>
        <dbReference type="ChEBI" id="CHEBI:61557"/>
        <dbReference type="ChEBI" id="CHEBI:140395"/>
        <dbReference type="EC" id="2.7.7.6"/>
    </reaction>
</comment>
<comment type="subunit">
    <text>The RNAP catalytic core consists of 2 alpha, 1 beta, 1 beta' and 1 omega subunit. When a sigma factor is associated with the core the holoenzyme is formed, which can initiate transcription.</text>
</comment>
<comment type="similarity">
    <text evidence="1">Belongs to the RNA polymerase beta chain family.</text>
</comment>
<accession>Q8RQE9</accession>
<accession>Q5SHB7</accession>
<proteinExistence type="evidence at protein level"/>
<keyword id="KW-0002">3D-structure</keyword>
<keyword id="KW-0240">DNA-directed RNA polymerase</keyword>
<keyword id="KW-0548">Nucleotidyltransferase</keyword>
<keyword id="KW-1185">Reference proteome</keyword>
<keyword id="KW-0804">Transcription</keyword>
<keyword id="KW-0808">Transferase</keyword>
<dbReference type="EC" id="2.7.7.6" evidence="1"/>
<dbReference type="EMBL" id="AB083789">
    <property type="protein sequence ID" value="BAB89400.1"/>
    <property type="molecule type" value="Genomic_DNA"/>
</dbReference>
<dbReference type="EMBL" id="AP008226">
    <property type="protein sequence ID" value="BAD71636.1"/>
    <property type="molecule type" value="Genomic_DNA"/>
</dbReference>
<dbReference type="RefSeq" id="WP_011228935.1">
    <property type="nucleotide sequence ID" value="NC_006461.1"/>
</dbReference>
<dbReference type="RefSeq" id="YP_145079.1">
    <property type="nucleotide sequence ID" value="NC_006461.1"/>
</dbReference>
<dbReference type="PDB" id="1IW7">
    <property type="method" value="X-ray"/>
    <property type="resolution" value="2.60 A"/>
    <property type="chains" value="C/M=1-1119"/>
</dbReference>
<dbReference type="PDB" id="1SMY">
    <property type="method" value="X-ray"/>
    <property type="resolution" value="2.70 A"/>
    <property type="chains" value="C/M=1-1119"/>
</dbReference>
<dbReference type="PDB" id="1ZYR">
    <property type="method" value="X-ray"/>
    <property type="resolution" value="3.00 A"/>
    <property type="chains" value="C/M=1-1119"/>
</dbReference>
<dbReference type="PDB" id="2A68">
    <property type="method" value="X-ray"/>
    <property type="resolution" value="2.50 A"/>
    <property type="chains" value="C/M=1-1119"/>
</dbReference>
<dbReference type="PDB" id="2A69">
    <property type="method" value="X-ray"/>
    <property type="resolution" value="2.50 A"/>
    <property type="chains" value="C/M=1-1119"/>
</dbReference>
<dbReference type="PDB" id="2A6E">
    <property type="method" value="X-ray"/>
    <property type="resolution" value="2.80 A"/>
    <property type="chains" value="C/M=1-1119"/>
</dbReference>
<dbReference type="PDB" id="2A6H">
    <property type="method" value="X-ray"/>
    <property type="resolution" value="2.40 A"/>
    <property type="chains" value="C/M=1-1119"/>
</dbReference>
<dbReference type="PDB" id="2BE5">
    <property type="method" value="X-ray"/>
    <property type="resolution" value="2.40 A"/>
    <property type="chains" value="C/M=1-1119"/>
</dbReference>
<dbReference type="PDB" id="2CW0">
    <property type="method" value="X-ray"/>
    <property type="resolution" value="3.30 A"/>
    <property type="chains" value="C/M=1-1119"/>
</dbReference>
<dbReference type="PDB" id="2O5I">
    <property type="method" value="X-ray"/>
    <property type="resolution" value="2.50 A"/>
    <property type="chains" value="C/M=1-1119"/>
</dbReference>
<dbReference type="PDB" id="2O5J">
    <property type="method" value="X-ray"/>
    <property type="resolution" value="3.00 A"/>
    <property type="chains" value="C/M=1-1119"/>
</dbReference>
<dbReference type="PDB" id="2PPB">
    <property type="method" value="X-ray"/>
    <property type="resolution" value="3.00 A"/>
    <property type="chains" value="C/M=1-1119"/>
</dbReference>
<dbReference type="PDB" id="3AOH">
    <property type="method" value="X-ray"/>
    <property type="resolution" value="4.10 A"/>
    <property type="chains" value="C/H/M=1-1119"/>
</dbReference>
<dbReference type="PDB" id="3AOI">
    <property type="method" value="X-ray"/>
    <property type="resolution" value="4.30 A"/>
    <property type="chains" value="C/H/M=1-1119"/>
</dbReference>
<dbReference type="PDB" id="3DXJ">
    <property type="method" value="X-ray"/>
    <property type="resolution" value="3.00 A"/>
    <property type="chains" value="C/M=1-1119"/>
</dbReference>
<dbReference type="PDB" id="3EQL">
    <property type="method" value="X-ray"/>
    <property type="resolution" value="2.70 A"/>
    <property type="chains" value="C/M=1-1119"/>
</dbReference>
<dbReference type="PDB" id="3WOD">
    <property type="method" value="X-ray"/>
    <property type="resolution" value="3.60 A"/>
    <property type="chains" value="C=1-1119"/>
</dbReference>
<dbReference type="PDB" id="3WOE">
    <property type="method" value="X-ray"/>
    <property type="resolution" value="2.35 A"/>
    <property type="chains" value="A/C=703-830"/>
</dbReference>
<dbReference type="PDB" id="3WOF">
    <property type="method" value="X-ray"/>
    <property type="resolution" value="3.30 A"/>
    <property type="chains" value="A/C/E/G/I/K/M/O/Q/S/U/W=703-830"/>
</dbReference>
<dbReference type="PDB" id="4G7H">
    <property type="method" value="X-ray"/>
    <property type="resolution" value="2.90 A"/>
    <property type="chains" value="C/M=1-1119"/>
</dbReference>
<dbReference type="PDB" id="4G7O">
    <property type="method" value="X-ray"/>
    <property type="resolution" value="2.99 A"/>
    <property type="chains" value="C/M=1-1119"/>
</dbReference>
<dbReference type="PDB" id="4G7Z">
    <property type="method" value="X-ray"/>
    <property type="resolution" value="3.82 A"/>
    <property type="chains" value="C/M=1-1119"/>
</dbReference>
<dbReference type="PDB" id="4GZY">
    <property type="method" value="X-ray"/>
    <property type="resolution" value="3.51 A"/>
    <property type="chains" value="C=1-1119"/>
</dbReference>
<dbReference type="PDB" id="4GZZ">
    <property type="method" value="X-ray"/>
    <property type="resolution" value="4.29 A"/>
    <property type="chains" value="C=1-1119"/>
</dbReference>
<dbReference type="PDB" id="4MQ9">
    <property type="method" value="X-ray"/>
    <property type="resolution" value="3.35 A"/>
    <property type="chains" value="C=1-1119"/>
</dbReference>
<dbReference type="PDB" id="4OIN">
    <property type="method" value="X-ray"/>
    <property type="resolution" value="2.80 A"/>
    <property type="chains" value="C=1-1119"/>
</dbReference>
<dbReference type="PDB" id="4OIO">
    <property type="method" value="X-ray"/>
    <property type="resolution" value="3.10 A"/>
    <property type="chains" value="C=1-1119"/>
</dbReference>
<dbReference type="PDB" id="4OIP">
    <property type="method" value="X-ray"/>
    <property type="resolution" value="3.40 A"/>
    <property type="chains" value="C=1-1119"/>
</dbReference>
<dbReference type="PDB" id="4OIQ">
    <property type="method" value="X-ray"/>
    <property type="resolution" value="3.62 A"/>
    <property type="chains" value="C=1-1119"/>
</dbReference>
<dbReference type="PDB" id="4OIR">
    <property type="method" value="X-ray"/>
    <property type="resolution" value="3.10 A"/>
    <property type="chains" value="C=1-1119"/>
</dbReference>
<dbReference type="PDB" id="4Q4Z">
    <property type="method" value="X-ray"/>
    <property type="resolution" value="2.90 A"/>
    <property type="chains" value="C=1-1119"/>
</dbReference>
<dbReference type="PDB" id="4Q5S">
    <property type="method" value="X-ray"/>
    <property type="resolution" value="3.00 A"/>
    <property type="chains" value="C=1-1119"/>
</dbReference>
<dbReference type="PDB" id="4WQS">
    <property type="method" value="X-ray"/>
    <property type="resolution" value="4.31 A"/>
    <property type="chains" value="C/M=1-1119"/>
</dbReference>
<dbReference type="PDB" id="4WQT">
    <property type="method" value="X-ray"/>
    <property type="resolution" value="4.40 A"/>
    <property type="chains" value="C/H/M=1-1119"/>
</dbReference>
<dbReference type="PDB" id="5D4C">
    <property type="method" value="X-ray"/>
    <property type="resolution" value="3.28 A"/>
    <property type="chains" value="C/M=1-1119"/>
</dbReference>
<dbReference type="PDB" id="5D4D">
    <property type="method" value="X-ray"/>
    <property type="resolution" value="3.00 A"/>
    <property type="chains" value="C/M=1-1119"/>
</dbReference>
<dbReference type="PDB" id="5D4E">
    <property type="method" value="X-ray"/>
    <property type="resolution" value="3.08 A"/>
    <property type="chains" value="C/M=1-1119"/>
</dbReference>
<dbReference type="PDB" id="5E17">
    <property type="method" value="X-ray"/>
    <property type="resolution" value="3.20 A"/>
    <property type="chains" value="C=1-1119"/>
</dbReference>
<dbReference type="PDB" id="5E18">
    <property type="method" value="X-ray"/>
    <property type="resolution" value="3.30 A"/>
    <property type="chains" value="C=1-1119"/>
</dbReference>
<dbReference type="PDB" id="5I2D">
    <property type="method" value="X-ray"/>
    <property type="resolution" value="4.41 A"/>
    <property type="chains" value="C/N=1-1119"/>
</dbReference>
<dbReference type="PDB" id="5TMC">
    <property type="method" value="X-ray"/>
    <property type="resolution" value="2.71 A"/>
    <property type="chains" value="C=1-1119"/>
</dbReference>
<dbReference type="PDB" id="5TMF">
    <property type="method" value="X-ray"/>
    <property type="resolution" value="3.00 A"/>
    <property type="chains" value="C=1-1119"/>
</dbReference>
<dbReference type="PDB" id="5VO8">
    <property type="method" value="X-ray"/>
    <property type="resolution" value="3.30 A"/>
    <property type="chains" value="C=1-1119"/>
</dbReference>
<dbReference type="PDB" id="5VOI">
    <property type="method" value="X-ray"/>
    <property type="resolution" value="2.80 A"/>
    <property type="chains" value="C=1-1119"/>
</dbReference>
<dbReference type="PDB" id="5X21">
    <property type="method" value="X-ray"/>
    <property type="resolution" value="3.32 A"/>
    <property type="chains" value="C=1-1119"/>
</dbReference>
<dbReference type="PDB" id="5X22">
    <property type="method" value="X-ray"/>
    <property type="resolution" value="3.35 A"/>
    <property type="chains" value="C/M=1-1119"/>
</dbReference>
<dbReference type="PDB" id="5XJ0">
    <property type="method" value="X-ray"/>
    <property type="resolution" value="4.00 A"/>
    <property type="chains" value="C=1-1119"/>
</dbReference>
<dbReference type="PDB" id="6ASG">
    <property type="method" value="X-ray"/>
    <property type="resolution" value="3.80 A"/>
    <property type="chains" value="C=1-1119"/>
</dbReference>
<dbReference type="PDB" id="6CUU">
    <property type="method" value="X-ray"/>
    <property type="resolution" value="2.99 A"/>
    <property type="chains" value="C=1-1119"/>
</dbReference>
<dbReference type="PDB" id="6KQD">
    <property type="method" value="X-ray"/>
    <property type="resolution" value="3.30 A"/>
    <property type="chains" value="C/M=1-1119"/>
</dbReference>
<dbReference type="PDB" id="6KQE">
    <property type="method" value="X-ray"/>
    <property type="resolution" value="3.30 A"/>
    <property type="chains" value="C=1-1119"/>
</dbReference>
<dbReference type="PDB" id="6KQF">
    <property type="method" value="X-ray"/>
    <property type="resolution" value="2.45 A"/>
    <property type="chains" value="C=1-1119"/>
</dbReference>
<dbReference type="PDB" id="6KQG">
    <property type="method" value="X-ray"/>
    <property type="resolution" value="2.78 A"/>
    <property type="chains" value="C=1-1119"/>
</dbReference>
<dbReference type="PDB" id="6KQH">
    <property type="method" value="X-ray"/>
    <property type="resolution" value="3.18 A"/>
    <property type="chains" value="C=1-1119"/>
</dbReference>
<dbReference type="PDB" id="6KQL">
    <property type="method" value="X-ray"/>
    <property type="resolution" value="2.89 A"/>
    <property type="chains" value="C=1-1119"/>
</dbReference>
<dbReference type="PDB" id="6KQM">
    <property type="method" value="X-ray"/>
    <property type="resolution" value="3.20 A"/>
    <property type="chains" value="C=1-1119"/>
</dbReference>
<dbReference type="PDB" id="6KQN">
    <property type="method" value="X-ray"/>
    <property type="resolution" value="3.49 A"/>
    <property type="chains" value="C=1-1119"/>
</dbReference>
<dbReference type="PDB" id="6L74">
    <property type="method" value="X-ray"/>
    <property type="resolution" value="3.12 A"/>
    <property type="chains" value="C=1-1119"/>
</dbReference>
<dbReference type="PDB" id="6LTS">
    <property type="method" value="X-ray"/>
    <property type="resolution" value="3.45 A"/>
    <property type="chains" value="C=1-1119"/>
</dbReference>
<dbReference type="PDB" id="6M6A">
    <property type="method" value="EM"/>
    <property type="resolution" value="5.00 A"/>
    <property type="chains" value="C=1-1119"/>
</dbReference>
<dbReference type="PDB" id="6M6B">
    <property type="method" value="EM"/>
    <property type="resolution" value="4.10 A"/>
    <property type="chains" value="C=1-1119"/>
</dbReference>
<dbReference type="PDB" id="6M6C">
    <property type="method" value="EM"/>
    <property type="resolution" value="3.10 A"/>
    <property type="chains" value="C=1-1119"/>
</dbReference>
<dbReference type="PDB" id="6OVR">
    <property type="method" value="X-ray"/>
    <property type="resolution" value="2.84 A"/>
    <property type="chains" value="C=1-1119"/>
</dbReference>
<dbReference type="PDB" id="6OVY">
    <property type="method" value="X-ray"/>
    <property type="resolution" value="3.00 A"/>
    <property type="chains" value="C=1-1119"/>
</dbReference>
<dbReference type="PDB" id="6OW3">
    <property type="method" value="X-ray"/>
    <property type="resolution" value="2.77 A"/>
    <property type="chains" value="C=1-1119"/>
</dbReference>
<dbReference type="PDB" id="6OY5">
    <property type="method" value="X-ray"/>
    <property type="resolution" value="3.10 A"/>
    <property type="chains" value="C=1-1119"/>
</dbReference>
<dbReference type="PDB" id="6OY6">
    <property type="method" value="X-ray"/>
    <property type="resolution" value="3.10 A"/>
    <property type="chains" value="C=1-1119"/>
</dbReference>
<dbReference type="PDB" id="6OY7">
    <property type="method" value="X-ray"/>
    <property type="resolution" value="3.04 A"/>
    <property type="chains" value="C=1-1119"/>
</dbReference>
<dbReference type="PDB" id="6P70">
    <property type="method" value="X-ray"/>
    <property type="resolution" value="3.05 A"/>
    <property type="chains" value="C=1-1119"/>
</dbReference>
<dbReference type="PDB" id="6P71">
    <property type="method" value="X-ray"/>
    <property type="resolution" value="2.92 A"/>
    <property type="chains" value="C=1-1119"/>
</dbReference>
<dbReference type="PDB" id="6WOX">
    <property type="method" value="X-ray"/>
    <property type="resolution" value="3.14 A"/>
    <property type="chains" value="C=1-1119"/>
</dbReference>
<dbReference type="PDB" id="6WOY">
    <property type="method" value="X-ray"/>
    <property type="resolution" value="3.00 A"/>
    <property type="chains" value="C=1-1119"/>
</dbReference>
<dbReference type="PDB" id="7EH0">
    <property type="method" value="X-ray"/>
    <property type="resolution" value="2.81 A"/>
    <property type="chains" value="C=1-1119"/>
</dbReference>
<dbReference type="PDB" id="7EH1">
    <property type="method" value="X-ray"/>
    <property type="resolution" value="2.90 A"/>
    <property type="chains" value="C=1-1119"/>
</dbReference>
<dbReference type="PDB" id="7EH2">
    <property type="method" value="X-ray"/>
    <property type="resolution" value="3.34 A"/>
    <property type="chains" value="C/M=1-1119"/>
</dbReference>
<dbReference type="PDB" id="7MLB">
    <property type="method" value="X-ray"/>
    <property type="resolution" value="3.60 A"/>
    <property type="chains" value="C=1-1119"/>
</dbReference>
<dbReference type="PDB" id="7MLI">
    <property type="method" value="X-ray"/>
    <property type="resolution" value="3.60 A"/>
    <property type="chains" value="C=1-1119"/>
</dbReference>
<dbReference type="PDB" id="7MLJ">
    <property type="method" value="X-ray"/>
    <property type="resolution" value="3.75 A"/>
    <property type="chains" value="C=1-1119"/>
</dbReference>
<dbReference type="PDB" id="7RDQ">
    <property type="method" value="EM"/>
    <property type="resolution" value="3.00 A"/>
    <property type="chains" value="C=1-1119"/>
</dbReference>
<dbReference type="PDB" id="8HSG">
    <property type="method" value="EM"/>
    <property type="resolution" value="3.20 A"/>
    <property type="chains" value="I=1-1119"/>
</dbReference>
<dbReference type="PDB" id="8HSH">
    <property type="method" value="EM"/>
    <property type="resolution" value="3.40 A"/>
    <property type="chains" value="I=1-1119"/>
</dbReference>
<dbReference type="PDB" id="8HSL">
    <property type="method" value="EM"/>
    <property type="resolution" value="5.80 A"/>
    <property type="chains" value="I=1-1119"/>
</dbReference>
<dbReference type="PDB" id="8HSR">
    <property type="method" value="EM"/>
    <property type="resolution" value="4.00 A"/>
    <property type="chains" value="I=1-1119"/>
</dbReference>
<dbReference type="PDB" id="8W8N">
    <property type="method" value="X-ray"/>
    <property type="resolution" value="2.69 A"/>
    <property type="chains" value="C=1-1119"/>
</dbReference>
<dbReference type="PDB" id="8W8O">
    <property type="method" value="X-ray"/>
    <property type="resolution" value="2.51 A"/>
    <property type="chains" value="C=1-1119"/>
</dbReference>
<dbReference type="PDB" id="8W8P">
    <property type="method" value="X-ray"/>
    <property type="resolution" value="3.17 A"/>
    <property type="chains" value="C=1-1119"/>
</dbReference>
<dbReference type="PDBsum" id="1IW7"/>
<dbReference type="PDBsum" id="1SMY"/>
<dbReference type="PDBsum" id="1ZYR"/>
<dbReference type="PDBsum" id="2A68"/>
<dbReference type="PDBsum" id="2A69"/>
<dbReference type="PDBsum" id="2A6E"/>
<dbReference type="PDBsum" id="2A6H"/>
<dbReference type="PDBsum" id="2BE5"/>
<dbReference type="PDBsum" id="2CW0"/>
<dbReference type="PDBsum" id="2O5I"/>
<dbReference type="PDBsum" id="2O5J"/>
<dbReference type="PDBsum" id="2PPB"/>
<dbReference type="PDBsum" id="3AOH"/>
<dbReference type="PDBsum" id="3AOI"/>
<dbReference type="PDBsum" id="3DXJ"/>
<dbReference type="PDBsum" id="3EQL"/>
<dbReference type="PDBsum" id="3WOD"/>
<dbReference type="PDBsum" id="3WOE"/>
<dbReference type="PDBsum" id="3WOF"/>
<dbReference type="PDBsum" id="4G7H"/>
<dbReference type="PDBsum" id="4G7O"/>
<dbReference type="PDBsum" id="4G7Z"/>
<dbReference type="PDBsum" id="4GZY"/>
<dbReference type="PDBsum" id="4GZZ"/>
<dbReference type="PDBsum" id="4MQ9"/>
<dbReference type="PDBsum" id="4OIN"/>
<dbReference type="PDBsum" id="4OIO"/>
<dbReference type="PDBsum" id="4OIP"/>
<dbReference type="PDBsum" id="4OIQ"/>
<dbReference type="PDBsum" id="4OIR"/>
<dbReference type="PDBsum" id="4Q4Z"/>
<dbReference type="PDBsum" id="4Q5S"/>
<dbReference type="PDBsum" id="4WQS"/>
<dbReference type="PDBsum" id="4WQT"/>
<dbReference type="PDBsum" id="5D4C"/>
<dbReference type="PDBsum" id="5D4D"/>
<dbReference type="PDBsum" id="5D4E"/>
<dbReference type="PDBsum" id="5E17"/>
<dbReference type="PDBsum" id="5E18"/>
<dbReference type="PDBsum" id="5I2D"/>
<dbReference type="PDBsum" id="5TMC"/>
<dbReference type="PDBsum" id="5TMF"/>
<dbReference type="PDBsum" id="5VO8"/>
<dbReference type="PDBsum" id="5VOI"/>
<dbReference type="PDBsum" id="5X21"/>
<dbReference type="PDBsum" id="5X22"/>
<dbReference type="PDBsum" id="5XJ0"/>
<dbReference type="PDBsum" id="6ASG"/>
<dbReference type="PDBsum" id="6CUU"/>
<dbReference type="PDBsum" id="6KQD"/>
<dbReference type="PDBsum" id="6KQE"/>
<dbReference type="PDBsum" id="6KQF"/>
<dbReference type="PDBsum" id="6KQG"/>
<dbReference type="PDBsum" id="6KQH"/>
<dbReference type="PDBsum" id="6KQL"/>
<dbReference type="PDBsum" id="6KQM"/>
<dbReference type="PDBsum" id="6KQN"/>
<dbReference type="PDBsum" id="6L74"/>
<dbReference type="PDBsum" id="6LTS"/>
<dbReference type="PDBsum" id="6M6A"/>
<dbReference type="PDBsum" id="6M6B"/>
<dbReference type="PDBsum" id="6M6C"/>
<dbReference type="PDBsum" id="6OVR"/>
<dbReference type="PDBsum" id="6OVY"/>
<dbReference type="PDBsum" id="6OW3"/>
<dbReference type="PDBsum" id="6OY5"/>
<dbReference type="PDBsum" id="6OY6"/>
<dbReference type="PDBsum" id="6OY7"/>
<dbReference type="PDBsum" id="6P70"/>
<dbReference type="PDBsum" id="6P71"/>
<dbReference type="PDBsum" id="6WOX"/>
<dbReference type="PDBsum" id="6WOY"/>
<dbReference type="PDBsum" id="7EH0"/>
<dbReference type="PDBsum" id="7EH1"/>
<dbReference type="PDBsum" id="7EH2"/>
<dbReference type="PDBsum" id="7MLB"/>
<dbReference type="PDBsum" id="7MLI"/>
<dbReference type="PDBsum" id="7MLJ"/>
<dbReference type="PDBsum" id="7RDQ"/>
<dbReference type="PDBsum" id="8HSG"/>
<dbReference type="PDBsum" id="8HSH"/>
<dbReference type="PDBsum" id="8HSL"/>
<dbReference type="PDBsum" id="8HSR"/>
<dbReference type="PDBsum" id="8W8N"/>
<dbReference type="PDBsum" id="8W8O"/>
<dbReference type="PDBsum" id="8W8P"/>
<dbReference type="EMDB" id="EMD-24424"/>
<dbReference type="EMDB" id="EMD-30117"/>
<dbReference type="EMDB" id="EMD-30118"/>
<dbReference type="EMDB" id="EMD-30119"/>
<dbReference type="EMDB" id="EMD-34996"/>
<dbReference type="EMDB" id="EMD-34997"/>
<dbReference type="EMDB" id="EMD-35000"/>
<dbReference type="EMDB" id="EMD-35004"/>
<dbReference type="SMR" id="Q8RQE9"/>
<dbReference type="DIP" id="DIP-47011N"/>
<dbReference type="IntAct" id="Q8RQE9">
    <property type="interactions" value="7"/>
</dbReference>
<dbReference type="DrugBank" id="DB08266">
    <property type="generic name" value="Methyl [(1E,5R)-5-{3-[(2E,4E)-2,5-dimethyl-2,4-octadienoyl]-2,4-dioxo-3,4-dihydro-2H-pyran-6-yl}hexylidene]carbamate"/>
</dbReference>
<dbReference type="DrugBank" id="DB08226">
    <property type="generic name" value="Myxopyronin B"/>
</dbReference>
<dbReference type="DrugBank" id="DB04788">
    <property type="generic name" value="Tagetitoxin"/>
</dbReference>
<dbReference type="EnsemblBacteria" id="BAD71636">
    <property type="protein sequence ID" value="BAD71636"/>
    <property type="gene ID" value="BAD71636"/>
</dbReference>
<dbReference type="GeneID" id="3169736"/>
<dbReference type="KEGG" id="ttj:TTHA1813"/>
<dbReference type="PATRIC" id="fig|300852.9.peg.1784"/>
<dbReference type="eggNOG" id="COG0085">
    <property type="taxonomic scope" value="Bacteria"/>
</dbReference>
<dbReference type="HOGENOM" id="CLU_000524_4_1_0"/>
<dbReference type="PhylomeDB" id="Q8RQE9"/>
<dbReference type="BRENDA" id="2.7.7.6">
    <property type="organism ID" value="2305"/>
</dbReference>
<dbReference type="EvolutionaryTrace" id="Q8RQE9"/>
<dbReference type="PRO" id="PR:Q8RQE9"/>
<dbReference type="Proteomes" id="UP000000532">
    <property type="component" value="Chromosome"/>
</dbReference>
<dbReference type="GO" id="GO:0000428">
    <property type="term" value="C:DNA-directed RNA polymerase complex"/>
    <property type="evidence" value="ECO:0007669"/>
    <property type="project" value="UniProtKB-KW"/>
</dbReference>
<dbReference type="GO" id="GO:0003677">
    <property type="term" value="F:DNA binding"/>
    <property type="evidence" value="ECO:0007669"/>
    <property type="project" value="UniProtKB-UniRule"/>
</dbReference>
<dbReference type="GO" id="GO:0003899">
    <property type="term" value="F:DNA-directed RNA polymerase activity"/>
    <property type="evidence" value="ECO:0007669"/>
    <property type="project" value="UniProtKB-UniRule"/>
</dbReference>
<dbReference type="GO" id="GO:0032549">
    <property type="term" value="F:ribonucleoside binding"/>
    <property type="evidence" value="ECO:0007669"/>
    <property type="project" value="InterPro"/>
</dbReference>
<dbReference type="GO" id="GO:0006351">
    <property type="term" value="P:DNA-templated transcription"/>
    <property type="evidence" value="ECO:0007669"/>
    <property type="project" value="UniProtKB-UniRule"/>
</dbReference>
<dbReference type="CDD" id="cd00653">
    <property type="entry name" value="RNA_pol_B_RPB2"/>
    <property type="match status" value="1"/>
</dbReference>
<dbReference type="FunFam" id="3.90.1800.10:FF:000001">
    <property type="entry name" value="DNA-directed RNA polymerase subunit beta"/>
    <property type="match status" value="1"/>
</dbReference>
<dbReference type="Gene3D" id="2.40.50.100">
    <property type="match status" value="1"/>
</dbReference>
<dbReference type="Gene3D" id="2.40.50.150">
    <property type="match status" value="1"/>
</dbReference>
<dbReference type="Gene3D" id="3.90.1100.10">
    <property type="match status" value="1"/>
</dbReference>
<dbReference type="Gene3D" id="2.30.150.10">
    <property type="entry name" value="DNA-directed RNA polymerase, beta subunit, external 1 domain"/>
    <property type="match status" value="1"/>
</dbReference>
<dbReference type="Gene3D" id="2.40.270.10">
    <property type="entry name" value="DNA-directed RNA polymerase, subunit 2, domain 6"/>
    <property type="match status" value="1"/>
</dbReference>
<dbReference type="Gene3D" id="3.90.1800.10">
    <property type="entry name" value="RNA polymerase alpha subunit dimerisation domain"/>
    <property type="match status" value="1"/>
</dbReference>
<dbReference type="Gene3D" id="3.90.1110.10">
    <property type="entry name" value="RNA polymerase Rpb2, domain 2"/>
    <property type="match status" value="1"/>
</dbReference>
<dbReference type="HAMAP" id="MF_01321">
    <property type="entry name" value="RNApol_bact_RpoB"/>
    <property type="match status" value="1"/>
</dbReference>
<dbReference type="InterPro" id="IPR042107">
    <property type="entry name" value="DNA-dir_RNA_pol_bsu_ext_1_sf"/>
</dbReference>
<dbReference type="InterPro" id="IPR019462">
    <property type="entry name" value="DNA-dir_RNA_pol_bsu_external_1"/>
</dbReference>
<dbReference type="InterPro" id="IPR015712">
    <property type="entry name" value="DNA-dir_RNA_pol_su2"/>
</dbReference>
<dbReference type="InterPro" id="IPR007120">
    <property type="entry name" value="DNA-dir_RNAP_su2_dom"/>
</dbReference>
<dbReference type="InterPro" id="IPR037033">
    <property type="entry name" value="DNA-dir_RNAP_su2_hyb_sf"/>
</dbReference>
<dbReference type="InterPro" id="IPR010243">
    <property type="entry name" value="RNA_pol_bsu_bac"/>
</dbReference>
<dbReference type="InterPro" id="IPR007121">
    <property type="entry name" value="RNA_pol_bsu_CS"/>
</dbReference>
<dbReference type="InterPro" id="IPR007644">
    <property type="entry name" value="RNA_pol_bsu_protrusion"/>
</dbReference>
<dbReference type="InterPro" id="IPR007642">
    <property type="entry name" value="RNA_pol_Rpb2_2"/>
</dbReference>
<dbReference type="InterPro" id="IPR037034">
    <property type="entry name" value="RNA_pol_Rpb2_2_sf"/>
</dbReference>
<dbReference type="InterPro" id="IPR007645">
    <property type="entry name" value="RNA_pol_Rpb2_3"/>
</dbReference>
<dbReference type="InterPro" id="IPR007641">
    <property type="entry name" value="RNA_pol_Rpb2_7"/>
</dbReference>
<dbReference type="InterPro" id="IPR014724">
    <property type="entry name" value="RNA_pol_RPB2_OB-fold"/>
</dbReference>
<dbReference type="NCBIfam" id="NF001616">
    <property type="entry name" value="PRK00405.1"/>
    <property type="match status" value="1"/>
</dbReference>
<dbReference type="NCBIfam" id="TIGR02013">
    <property type="entry name" value="rpoB"/>
    <property type="match status" value="1"/>
</dbReference>
<dbReference type="PANTHER" id="PTHR20856">
    <property type="entry name" value="DNA-DIRECTED RNA POLYMERASE I SUBUNIT 2"/>
    <property type="match status" value="1"/>
</dbReference>
<dbReference type="Pfam" id="PF04563">
    <property type="entry name" value="RNA_pol_Rpb2_1"/>
    <property type="match status" value="1"/>
</dbReference>
<dbReference type="Pfam" id="PF04561">
    <property type="entry name" value="RNA_pol_Rpb2_2"/>
    <property type="match status" value="1"/>
</dbReference>
<dbReference type="Pfam" id="PF04565">
    <property type="entry name" value="RNA_pol_Rpb2_3"/>
    <property type="match status" value="1"/>
</dbReference>
<dbReference type="Pfam" id="PF10385">
    <property type="entry name" value="RNA_pol_Rpb2_45"/>
    <property type="match status" value="1"/>
</dbReference>
<dbReference type="Pfam" id="PF00562">
    <property type="entry name" value="RNA_pol_Rpb2_6"/>
    <property type="match status" value="1"/>
</dbReference>
<dbReference type="Pfam" id="PF04560">
    <property type="entry name" value="RNA_pol_Rpb2_7"/>
    <property type="match status" value="1"/>
</dbReference>
<dbReference type="SUPFAM" id="SSF64484">
    <property type="entry name" value="beta and beta-prime subunits of DNA dependent RNA-polymerase"/>
    <property type="match status" value="1"/>
</dbReference>
<dbReference type="PROSITE" id="PS01166">
    <property type="entry name" value="RNA_POL_BETA"/>
    <property type="match status" value="1"/>
</dbReference>
<gene>
    <name evidence="1" type="primary">rpoB</name>
    <name type="ordered locus">TTHA1813</name>
</gene>
<feature type="chain" id="PRO_0000047985" description="DNA-directed RNA polymerase subunit beta">
    <location>
        <begin position="1"/>
        <end position="1119"/>
    </location>
</feature>
<feature type="strand" evidence="3">
    <location>
        <begin position="2"/>
        <end position="5"/>
    </location>
</feature>
<feature type="helix" evidence="3">
    <location>
        <begin position="20"/>
        <end position="29"/>
    </location>
</feature>
<feature type="helix" evidence="6">
    <location>
        <begin position="31"/>
        <end position="33"/>
    </location>
</feature>
<feature type="helix" evidence="14">
    <location>
        <begin position="36"/>
        <end position="38"/>
    </location>
</feature>
<feature type="helix" evidence="3">
    <location>
        <begin position="43"/>
        <end position="51"/>
    </location>
</feature>
<feature type="strand" evidence="3">
    <location>
        <begin position="53"/>
        <end position="56"/>
    </location>
</feature>
<feature type="strand" evidence="3">
    <location>
        <begin position="59"/>
        <end position="61"/>
    </location>
</feature>
<feature type="strand" evidence="3">
    <location>
        <begin position="64"/>
        <end position="68"/>
    </location>
</feature>
<feature type="helix" evidence="3">
    <location>
        <begin position="80"/>
        <end position="85"/>
    </location>
</feature>
<feature type="strand" evidence="3">
    <location>
        <begin position="91"/>
        <end position="94"/>
    </location>
</feature>
<feature type="strand" evidence="3">
    <location>
        <begin position="98"/>
        <end position="100"/>
    </location>
</feature>
<feature type="strand" evidence="3">
    <location>
        <begin position="103"/>
        <end position="105"/>
    </location>
</feature>
<feature type="strand" evidence="6">
    <location>
        <begin position="107"/>
        <end position="109"/>
    </location>
</feature>
<feature type="strand" evidence="3">
    <location>
        <begin position="117"/>
        <end position="119"/>
    </location>
</feature>
<feature type="strand" evidence="2">
    <location>
        <begin position="123"/>
        <end position="125"/>
    </location>
</feature>
<feature type="strand" evidence="3">
    <location>
        <begin position="129"/>
        <end position="132"/>
    </location>
</feature>
<feature type="strand" evidence="3">
    <location>
        <begin position="134"/>
        <end position="136"/>
    </location>
</feature>
<feature type="strand" evidence="3">
    <location>
        <begin position="138"/>
        <end position="142"/>
    </location>
</feature>
<feature type="strand" evidence="3">
    <location>
        <begin position="146"/>
        <end position="149"/>
    </location>
</feature>
<feature type="strand" evidence="14">
    <location>
        <begin position="152"/>
        <end position="154"/>
    </location>
</feature>
<feature type="strand" evidence="3">
    <location>
        <begin position="159"/>
        <end position="162"/>
    </location>
</feature>
<feature type="strand" evidence="3">
    <location>
        <begin position="166"/>
        <end position="169"/>
    </location>
</feature>
<feature type="strand" evidence="3">
    <location>
        <begin position="172"/>
        <end position="177"/>
    </location>
</feature>
<feature type="turn" evidence="3">
    <location>
        <begin position="178"/>
        <end position="180"/>
    </location>
</feature>
<feature type="strand" evidence="3">
    <location>
        <begin position="181"/>
        <end position="191"/>
    </location>
</feature>
<feature type="helix" evidence="3">
    <location>
        <begin position="193"/>
        <end position="200"/>
    </location>
</feature>
<feature type="helix" evidence="3">
    <location>
        <begin position="204"/>
        <end position="212"/>
    </location>
</feature>
<feature type="strand" evidence="14">
    <location>
        <begin position="213"/>
        <end position="216"/>
    </location>
</feature>
<feature type="helix" evidence="3">
    <location>
        <begin position="218"/>
        <end position="221"/>
    </location>
</feature>
<feature type="helix" evidence="3">
    <location>
        <begin position="225"/>
        <end position="228"/>
    </location>
</feature>
<feature type="helix" evidence="3">
    <location>
        <begin position="231"/>
        <end position="241"/>
    </location>
</feature>
<feature type="strand" evidence="3">
    <location>
        <begin position="242"/>
        <end position="244"/>
    </location>
</feature>
<feature type="turn" evidence="15">
    <location>
        <begin position="250"/>
        <end position="252"/>
    </location>
</feature>
<feature type="helix" evidence="3">
    <location>
        <begin position="253"/>
        <end position="257"/>
    </location>
</feature>
<feature type="strand" evidence="3">
    <location>
        <begin position="259"/>
        <end position="264"/>
    </location>
</feature>
<feature type="turn" evidence="3">
    <location>
        <begin position="269"/>
        <end position="271"/>
    </location>
</feature>
<feature type="helix" evidence="3">
    <location>
        <begin position="274"/>
        <end position="278"/>
    </location>
</feature>
<feature type="strand" evidence="13">
    <location>
        <begin position="280"/>
        <end position="284"/>
    </location>
</feature>
<feature type="turn" evidence="3">
    <location>
        <begin position="287"/>
        <end position="290"/>
    </location>
</feature>
<feature type="strand" evidence="3">
    <location>
        <begin position="294"/>
        <end position="296"/>
    </location>
</feature>
<feature type="strand" evidence="14">
    <location>
        <begin position="297"/>
        <end position="302"/>
    </location>
</feature>
<feature type="helix" evidence="3">
    <location>
        <begin position="303"/>
        <end position="314"/>
    </location>
</feature>
<feature type="strand" evidence="17">
    <location>
        <begin position="318"/>
        <end position="320"/>
    </location>
</feature>
<feature type="strand" evidence="11">
    <location>
        <begin position="325"/>
        <end position="327"/>
    </location>
</feature>
<feature type="turn" evidence="3">
    <location>
        <begin position="328"/>
        <end position="330"/>
    </location>
</feature>
<feature type="strand" evidence="3">
    <location>
        <begin position="331"/>
        <end position="334"/>
    </location>
</feature>
<feature type="helix" evidence="3">
    <location>
        <begin position="336"/>
        <end position="361"/>
    </location>
</feature>
<feature type="strand" evidence="14">
    <location>
        <begin position="364"/>
        <end position="366"/>
    </location>
</feature>
<feature type="turn" evidence="3">
    <location>
        <begin position="370"/>
        <end position="372"/>
    </location>
</feature>
<feature type="helix" evidence="3">
    <location>
        <begin position="376"/>
        <end position="387"/>
    </location>
</feature>
<feature type="strand" evidence="3">
    <location>
        <begin position="390"/>
        <end position="394"/>
    </location>
</feature>
<feature type="helix" evidence="3">
    <location>
        <begin position="401"/>
        <end position="408"/>
    </location>
</feature>
<feature type="strand" evidence="3">
    <location>
        <begin position="409"/>
        <end position="418"/>
    </location>
</feature>
<feature type="strand" evidence="13">
    <location>
        <begin position="419"/>
        <end position="421"/>
    </location>
</feature>
<feature type="helix" evidence="3">
    <location>
        <begin position="425"/>
        <end position="428"/>
    </location>
</feature>
<feature type="helix" evidence="3">
    <location>
        <begin position="432"/>
        <end position="434"/>
    </location>
</feature>
<feature type="turn" evidence="3">
    <location>
        <begin position="435"/>
        <end position="437"/>
    </location>
</feature>
<feature type="strand" evidence="6">
    <location>
        <begin position="440"/>
        <end position="443"/>
    </location>
</feature>
<feature type="strand" evidence="3">
    <location>
        <begin position="445"/>
        <end position="448"/>
    </location>
</feature>
<feature type="strand" evidence="3">
    <location>
        <begin position="450"/>
        <end position="455"/>
    </location>
</feature>
<feature type="strand" evidence="7">
    <location>
        <begin position="456"/>
        <end position="458"/>
    </location>
</feature>
<feature type="strand" evidence="8">
    <location>
        <begin position="460"/>
        <end position="462"/>
    </location>
</feature>
<feature type="strand" evidence="3">
    <location>
        <begin position="463"/>
        <end position="465"/>
    </location>
</feature>
<feature type="strand" evidence="3">
    <location>
        <begin position="467"/>
        <end position="475"/>
    </location>
</feature>
<feature type="strand" evidence="3">
    <location>
        <begin position="478"/>
        <end position="486"/>
    </location>
</feature>
<feature type="helix" evidence="3">
    <location>
        <begin position="488"/>
        <end position="493"/>
    </location>
</feature>
<feature type="strand" evidence="14">
    <location>
        <begin position="494"/>
        <end position="497"/>
    </location>
</feature>
<feature type="strand" evidence="5">
    <location>
        <begin position="499"/>
        <end position="501"/>
    </location>
</feature>
<feature type="strand" evidence="3">
    <location>
        <begin position="503"/>
        <end position="508"/>
    </location>
</feature>
<feature type="strand" evidence="3">
    <location>
        <begin position="511"/>
        <end position="524"/>
    </location>
</feature>
<feature type="turn" evidence="3">
    <location>
        <begin position="526"/>
        <end position="528"/>
    </location>
</feature>
<feature type="strand" evidence="3">
    <location>
        <begin position="531"/>
        <end position="533"/>
    </location>
</feature>
<feature type="turn" evidence="3">
    <location>
        <begin position="536"/>
        <end position="539"/>
    </location>
</feature>
<feature type="helix" evidence="3">
    <location>
        <begin position="542"/>
        <end position="545"/>
    </location>
</feature>
<feature type="helix" evidence="3">
    <location>
        <begin position="550"/>
        <end position="552"/>
    </location>
</feature>
<feature type="helix" evidence="3">
    <location>
        <begin position="555"/>
        <end position="565"/>
    </location>
</feature>
<feature type="strand" evidence="3">
    <location>
        <begin position="571"/>
        <end position="573"/>
    </location>
</feature>
<feature type="strand" evidence="3">
    <location>
        <begin position="578"/>
        <end position="580"/>
    </location>
</feature>
<feature type="helix" evidence="3">
    <location>
        <begin position="584"/>
        <end position="590"/>
    </location>
</feature>
<feature type="turn" evidence="17">
    <location>
        <begin position="591"/>
        <end position="593"/>
    </location>
</feature>
<feature type="strand" evidence="3">
    <location>
        <begin position="594"/>
        <end position="596"/>
    </location>
</feature>
<feature type="strand" evidence="3">
    <location>
        <begin position="598"/>
        <end position="606"/>
    </location>
</feature>
<feature type="strand" evidence="3">
    <location>
        <begin position="608"/>
        <end position="615"/>
    </location>
</feature>
<feature type="turn" evidence="3">
    <location>
        <begin position="616"/>
        <end position="618"/>
    </location>
</feature>
<feature type="strand" evidence="3">
    <location>
        <begin position="619"/>
        <end position="621"/>
    </location>
</feature>
<feature type="strand" evidence="16">
    <location>
        <begin position="622"/>
        <end position="624"/>
    </location>
</feature>
<feature type="strand" evidence="3">
    <location>
        <begin position="628"/>
        <end position="630"/>
    </location>
</feature>
<feature type="strand" evidence="14">
    <location>
        <begin position="634"/>
        <end position="637"/>
    </location>
</feature>
<feature type="strand" evidence="3">
    <location>
        <begin position="654"/>
        <end position="657"/>
    </location>
</feature>
<feature type="strand" evidence="3">
    <location>
        <begin position="661"/>
        <end position="666"/>
    </location>
</feature>
<feature type="strand" evidence="3">
    <location>
        <begin position="669"/>
        <end position="675"/>
    </location>
</feature>
<feature type="turn" evidence="14">
    <location>
        <begin position="680"/>
        <end position="683"/>
    </location>
</feature>
<feature type="strand" evidence="3">
    <location>
        <begin position="684"/>
        <end position="691"/>
    </location>
</feature>
<feature type="helix" evidence="3">
    <location>
        <begin position="693"/>
        <end position="696"/>
    </location>
</feature>
<feature type="turn" evidence="14">
    <location>
        <begin position="697"/>
        <end position="700"/>
    </location>
</feature>
<feature type="strand" evidence="10">
    <location>
        <begin position="703"/>
        <end position="713"/>
    </location>
</feature>
<feature type="strand" evidence="3">
    <location>
        <begin position="727"/>
        <end position="729"/>
    </location>
</feature>
<feature type="helix" evidence="10">
    <location>
        <begin position="731"/>
        <end position="734"/>
    </location>
</feature>
<feature type="helix" evidence="2">
    <location>
        <begin position="735"/>
        <end position="737"/>
    </location>
</feature>
<feature type="turn" evidence="2">
    <location>
        <begin position="738"/>
        <end position="740"/>
    </location>
</feature>
<feature type="strand" evidence="10">
    <location>
        <begin position="741"/>
        <end position="743"/>
    </location>
</feature>
<feature type="strand" evidence="10">
    <location>
        <begin position="754"/>
        <end position="756"/>
    </location>
</feature>
<feature type="strand" evidence="10">
    <location>
        <begin position="758"/>
        <end position="761"/>
    </location>
</feature>
<feature type="strand" evidence="2">
    <location>
        <begin position="762"/>
        <end position="766"/>
    </location>
</feature>
<feature type="helix" evidence="10">
    <location>
        <begin position="769"/>
        <end position="778"/>
    </location>
</feature>
<feature type="strand" evidence="10">
    <location>
        <begin position="785"/>
        <end position="787"/>
    </location>
</feature>
<feature type="strand" evidence="10">
    <location>
        <begin position="798"/>
        <end position="807"/>
    </location>
</feature>
<feature type="turn" evidence="13">
    <location>
        <begin position="808"/>
        <end position="812"/>
    </location>
</feature>
<feature type="strand" evidence="10">
    <location>
        <begin position="819"/>
        <end position="829"/>
    </location>
</feature>
<feature type="strand" evidence="3">
    <location>
        <begin position="838"/>
        <end position="840"/>
    </location>
</feature>
<feature type="strand" evidence="9">
    <location>
        <begin position="842"/>
        <end position="844"/>
    </location>
</feature>
<feature type="strand" evidence="3">
    <location>
        <begin position="846"/>
        <end position="853"/>
    </location>
</feature>
<feature type="turn" evidence="3">
    <location>
        <begin position="855"/>
        <end position="857"/>
    </location>
</feature>
<feature type="strand" evidence="3">
    <location>
        <begin position="862"/>
        <end position="864"/>
    </location>
</feature>
<feature type="strand" evidence="3">
    <location>
        <begin position="868"/>
        <end position="870"/>
    </location>
</feature>
<feature type="turn" evidence="3">
    <location>
        <begin position="874"/>
        <end position="880"/>
    </location>
</feature>
<feature type="helix" evidence="3">
    <location>
        <begin position="883"/>
        <end position="896"/>
    </location>
</feature>
<feature type="strand" evidence="3">
    <location>
        <begin position="899"/>
        <end position="902"/>
    </location>
</feature>
<feature type="turn" evidence="3">
    <location>
        <begin position="905"/>
        <end position="907"/>
    </location>
</feature>
<feature type="helix" evidence="3">
    <location>
        <begin position="911"/>
        <end position="932"/>
    </location>
</feature>
<feature type="helix" evidence="3">
    <location>
        <begin position="938"/>
        <end position="948"/>
    </location>
</feature>
<feature type="turn" evidence="3">
    <location>
        <begin position="949"/>
        <end position="951"/>
    </location>
</feature>
<feature type="strand" evidence="13">
    <location>
        <begin position="955"/>
        <end position="957"/>
    </location>
</feature>
<feature type="helix" evidence="3">
    <location>
        <begin position="959"/>
        <end position="968"/>
    </location>
</feature>
<feature type="strand" evidence="3">
    <location>
        <begin position="977"/>
        <end position="979"/>
    </location>
</feature>
<feature type="strand" evidence="12">
    <location>
        <begin position="980"/>
        <end position="982"/>
    </location>
</feature>
<feature type="strand" evidence="3">
    <location>
        <begin position="987"/>
        <end position="997"/>
    </location>
</feature>
<feature type="turn" evidence="3">
    <location>
        <begin position="1001"/>
        <end position="1003"/>
    </location>
</feature>
<feature type="strand" evidence="3">
    <location>
        <begin position="1006"/>
        <end position="1010"/>
    </location>
</feature>
<feature type="strand" evidence="3">
    <location>
        <begin position="1015"/>
        <end position="1017"/>
    </location>
</feature>
<feature type="strand" evidence="3">
    <location>
        <begin position="1024"/>
        <end position="1026"/>
    </location>
</feature>
<feature type="strand" evidence="3">
    <location>
        <begin position="1030"/>
        <end position="1032"/>
    </location>
</feature>
<feature type="helix" evidence="3">
    <location>
        <begin position="1034"/>
        <end position="1042"/>
    </location>
</feature>
<feature type="helix" evidence="3">
    <location>
        <begin position="1047"/>
        <end position="1053"/>
    </location>
</feature>
<feature type="turn" evidence="3">
    <location>
        <begin position="1054"/>
        <end position="1058"/>
    </location>
</feature>
<feature type="helix" evidence="3">
    <location>
        <begin position="1060"/>
        <end position="1071"/>
    </location>
</feature>
<feature type="helix" evidence="3">
    <location>
        <begin position="1083"/>
        <end position="1094"/>
    </location>
</feature>
<feature type="strand" evidence="4">
    <location>
        <begin position="1098"/>
        <end position="1102"/>
    </location>
</feature>
<feature type="strand" evidence="3">
    <location>
        <begin position="1104"/>
        <end position="1106"/>
    </location>
</feature>
<feature type="strand" evidence="3">
    <location>
        <begin position="1114"/>
        <end position="1117"/>
    </location>
</feature>
<reference key="1">
    <citation type="journal article" date="2002" name="Acta Crystallogr. D">
        <title>Purification, crystallization and initial crystallographic analysis of RNA polymerase holoenzyme from Thermus thermophilus.</title>
        <authorList>
            <person name="Vassylyeva M.N."/>
            <person name="Lee J."/>
            <person name="Sekine S.I."/>
            <person name="Laptenko O."/>
            <person name="Kuramitsu S."/>
            <person name="Shibata T."/>
            <person name="Inoue Y."/>
            <person name="Borukhov S."/>
            <person name="Vassylyev D.G."/>
            <person name="Yokoyama S."/>
        </authorList>
    </citation>
    <scope>NUCLEOTIDE SEQUENCE [GENOMIC DNA]</scope>
</reference>
<reference key="2">
    <citation type="submission" date="2004-11" db="EMBL/GenBank/DDBJ databases">
        <title>Complete genome sequence of Thermus thermophilus HB8.</title>
        <authorList>
            <person name="Masui R."/>
            <person name="Kurokawa K."/>
            <person name="Nakagawa N."/>
            <person name="Tokunaga F."/>
            <person name="Koyama Y."/>
            <person name="Shibata T."/>
            <person name="Oshima T."/>
            <person name="Yokoyama S."/>
            <person name="Yasunaga T."/>
            <person name="Kuramitsu S."/>
        </authorList>
    </citation>
    <scope>NUCLEOTIDE SEQUENCE [LARGE SCALE GENOMIC DNA]</scope>
    <source>
        <strain>ATCC 27634 / DSM 579 / HB8</strain>
    </source>
</reference>
<evidence type="ECO:0000255" key="1">
    <source>
        <dbReference type="HAMAP-Rule" id="MF_01321"/>
    </source>
</evidence>
<evidence type="ECO:0007829" key="2">
    <source>
        <dbReference type="PDB" id="1IW7"/>
    </source>
</evidence>
<evidence type="ECO:0007829" key="3">
    <source>
        <dbReference type="PDB" id="2A6H"/>
    </source>
</evidence>
<evidence type="ECO:0007829" key="4">
    <source>
        <dbReference type="PDB" id="2BE5"/>
    </source>
</evidence>
<evidence type="ECO:0007829" key="5">
    <source>
        <dbReference type="PDB" id="2CW0"/>
    </source>
</evidence>
<evidence type="ECO:0007829" key="6">
    <source>
        <dbReference type="PDB" id="2O5I"/>
    </source>
</evidence>
<evidence type="ECO:0007829" key="7">
    <source>
        <dbReference type="PDB" id="2O5J"/>
    </source>
</evidence>
<evidence type="ECO:0007829" key="8">
    <source>
        <dbReference type="PDB" id="3DXJ"/>
    </source>
</evidence>
<evidence type="ECO:0007829" key="9">
    <source>
        <dbReference type="PDB" id="3EQL"/>
    </source>
</evidence>
<evidence type="ECO:0007829" key="10">
    <source>
        <dbReference type="PDB" id="3WOE"/>
    </source>
</evidence>
<evidence type="ECO:0007829" key="11">
    <source>
        <dbReference type="PDB" id="4G7O"/>
    </source>
</evidence>
<evidence type="ECO:0007829" key="12">
    <source>
        <dbReference type="PDB" id="5D4D"/>
    </source>
</evidence>
<evidence type="ECO:0007829" key="13">
    <source>
        <dbReference type="PDB" id="5TMC"/>
    </source>
</evidence>
<evidence type="ECO:0007829" key="14">
    <source>
        <dbReference type="PDB" id="6KQF"/>
    </source>
</evidence>
<evidence type="ECO:0007829" key="15">
    <source>
        <dbReference type="PDB" id="6OVY"/>
    </source>
</evidence>
<evidence type="ECO:0007829" key="16">
    <source>
        <dbReference type="PDB" id="6OY6"/>
    </source>
</evidence>
<evidence type="ECO:0007829" key="17">
    <source>
        <dbReference type="PDB" id="8HSG"/>
    </source>
</evidence>
<protein>
    <recommendedName>
        <fullName evidence="1">DNA-directed RNA polymerase subunit beta</fullName>
        <shortName evidence="1">RNAP subunit beta</shortName>
        <ecNumber evidence="1">2.7.7.6</ecNumber>
    </recommendedName>
    <alternativeName>
        <fullName evidence="1">RNA polymerase subunit beta</fullName>
    </alternativeName>
    <alternativeName>
        <fullName evidence="1">Transcriptase subunit beta</fullName>
    </alternativeName>
</protein>
<name>RPOB_THET8</name>